<feature type="chain" id="PRO_0000072724" description="Putative NADH dehydrogenase/NAD(P)H nitroreductase AF_2267">
    <location>
        <begin position="1"/>
        <end position="174"/>
    </location>
</feature>
<feature type="binding site" evidence="1">
    <location>
        <begin position="107"/>
        <end position="112"/>
    </location>
    <ligand>
        <name>NAD(+)</name>
        <dbReference type="ChEBI" id="CHEBI:57540"/>
    </ligand>
</feature>
<organism>
    <name type="scientific">Archaeoglobus fulgidus (strain ATCC 49558 / DSM 4304 / JCM 9628 / NBRC 100126 / VC-16)</name>
    <dbReference type="NCBI Taxonomy" id="224325"/>
    <lineage>
        <taxon>Archaea</taxon>
        <taxon>Methanobacteriati</taxon>
        <taxon>Methanobacteriota</taxon>
        <taxon>Archaeoglobi</taxon>
        <taxon>Archaeoglobales</taxon>
        <taxon>Archaeoglobaceae</taxon>
        <taxon>Archaeoglobus</taxon>
    </lineage>
</organism>
<proteinExistence type="inferred from homology"/>
<name>Y2267_ARCFU</name>
<gene>
    <name type="ordered locus">AF_2267</name>
</gene>
<reference key="1">
    <citation type="journal article" date="1997" name="Nature">
        <title>The complete genome sequence of the hyperthermophilic, sulphate-reducing archaeon Archaeoglobus fulgidus.</title>
        <authorList>
            <person name="Klenk H.-P."/>
            <person name="Clayton R.A."/>
            <person name="Tomb J.-F."/>
            <person name="White O."/>
            <person name="Nelson K.E."/>
            <person name="Ketchum K.A."/>
            <person name="Dodson R.J."/>
            <person name="Gwinn M.L."/>
            <person name="Hickey E.K."/>
            <person name="Peterson J.D."/>
            <person name="Richardson D.L."/>
            <person name="Kerlavage A.R."/>
            <person name="Graham D.E."/>
            <person name="Kyrpides N.C."/>
            <person name="Fleischmann R.D."/>
            <person name="Quackenbush J."/>
            <person name="Lee N.H."/>
            <person name="Sutton G.G."/>
            <person name="Gill S.R."/>
            <person name="Kirkness E.F."/>
            <person name="Dougherty B.A."/>
            <person name="McKenney K."/>
            <person name="Adams M.D."/>
            <person name="Loftus B.J."/>
            <person name="Peterson S.N."/>
            <person name="Reich C.I."/>
            <person name="McNeil L.K."/>
            <person name="Badger J.H."/>
            <person name="Glodek A."/>
            <person name="Zhou L."/>
            <person name="Overbeek R."/>
            <person name="Gocayne J.D."/>
            <person name="Weidman J.F."/>
            <person name="McDonald L.A."/>
            <person name="Utterback T.R."/>
            <person name="Cotton M.D."/>
            <person name="Spriggs T."/>
            <person name="Artiach P."/>
            <person name="Kaine B.P."/>
            <person name="Sykes S.M."/>
            <person name="Sadow P.W."/>
            <person name="D'Andrea K.P."/>
            <person name="Bowman C."/>
            <person name="Fujii C."/>
            <person name="Garland S.A."/>
            <person name="Mason T.M."/>
            <person name="Olsen G.J."/>
            <person name="Fraser C.M."/>
            <person name="Smith H.O."/>
            <person name="Woese C.R."/>
            <person name="Venter J.C."/>
        </authorList>
    </citation>
    <scope>NUCLEOTIDE SEQUENCE [LARGE SCALE GENOMIC DNA]</scope>
    <source>
        <strain>ATCC 49558 / DSM 4304 / JCM 9628 / NBRC 100126 / VC-16</strain>
    </source>
</reference>
<sequence length="174" mass="20098">MEECLKMIYTRRSIRVYSDRQISDEDIEKILKAAMLAPSAGNEQPWHFIVVRDREMLKKMSEAFTFGQMLPNASAAIVVCADPKLSKYPYDMWVQDCSAATENILLAARCLGIGSVWLGVYPREERMKALRELLGIPENIVVFSVVSLGYPKDEKDFYEADDRFNPDRIHREKW</sequence>
<keyword id="KW-0285">Flavoprotein</keyword>
<keyword id="KW-0288">FMN</keyword>
<keyword id="KW-0520">NAD</keyword>
<keyword id="KW-0521">NADP</keyword>
<keyword id="KW-0560">Oxidoreductase</keyword>
<keyword id="KW-1185">Reference proteome</keyword>
<dbReference type="EC" id="1.-.-.-"/>
<dbReference type="EMBL" id="AE000782">
    <property type="protein sequence ID" value="AAB88993.1"/>
    <property type="molecule type" value="Genomic_DNA"/>
</dbReference>
<dbReference type="PIR" id="C69533">
    <property type="entry name" value="C69533"/>
</dbReference>
<dbReference type="RefSeq" id="WP_010879756.1">
    <property type="nucleotide sequence ID" value="NC_000917.1"/>
</dbReference>
<dbReference type="SMR" id="O28017"/>
<dbReference type="STRING" id="224325.AF_2267"/>
<dbReference type="PaxDb" id="224325-AF_2267"/>
<dbReference type="EnsemblBacteria" id="AAB88993">
    <property type="protein sequence ID" value="AAB88993"/>
    <property type="gene ID" value="AF_2267"/>
</dbReference>
<dbReference type="KEGG" id="afu:AF_2267"/>
<dbReference type="eggNOG" id="arCOG00288">
    <property type="taxonomic scope" value="Archaea"/>
</dbReference>
<dbReference type="HOGENOM" id="CLU_070764_7_3_2"/>
<dbReference type="OrthoDB" id="287850at2157"/>
<dbReference type="PhylomeDB" id="O28017"/>
<dbReference type="Proteomes" id="UP000002199">
    <property type="component" value="Chromosome"/>
</dbReference>
<dbReference type="GO" id="GO:0016491">
    <property type="term" value="F:oxidoreductase activity"/>
    <property type="evidence" value="ECO:0007669"/>
    <property type="project" value="UniProtKB-KW"/>
</dbReference>
<dbReference type="CDD" id="cd02150">
    <property type="entry name" value="nitroreductase"/>
    <property type="match status" value="1"/>
</dbReference>
<dbReference type="Gene3D" id="3.40.109.10">
    <property type="entry name" value="NADH Oxidase"/>
    <property type="match status" value="1"/>
</dbReference>
<dbReference type="InterPro" id="IPR029479">
    <property type="entry name" value="Nitroreductase"/>
</dbReference>
<dbReference type="InterPro" id="IPR000415">
    <property type="entry name" value="Nitroreductase-like"/>
</dbReference>
<dbReference type="InterPro" id="IPR050627">
    <property type="entry name" value="Nitroreductase/BluB"/>
</dbReference>
<dbReference type="InterPro" id="IPR026021">
    <property type="entry name" value="YdjA-like"/>
</dbReference>
<dbReference type="PANTHER" id="PTHR23026:SF90">
    <property type="entry name" value="IODOTYROSINE DEIODINASE 1"/>
    <property type="match status" value="1"/>
</dbReference>
<dbReference type="PANTHER" id="PTHR23026">
    <property type="entry name" value="NADPH NITROREDUCTASE"/>
    <property type="match status" value="1"/>
</dbReference>
<dbReference type="Pfam" id="PF00881">
    <property type="entry name" value="Nitroreductase"/>
    <property type="match status" value="2"/>
</dbReference>
<dbReference type="PIRSF" id="PIRSF000232">
    <property type="entry name" value="YdjA"/>
    <property type="match status" value="1"/>
</dbReference>
<dbReference type="SUPFAM" id="SSF55469">
    <property type="entry name" value="FMN-dependent nitroreductase-like"/>
    <property type="match status" value="1"/>
</dbReference>
<evidence type="ECO:0000250" key="1"/>
<evidence type="ECO:0000305" key="2"/>
<accession>O28017</accession>
<comment type="cofactor">
    <cofactor evidence="2">
        <name>FMN</name>
        <dbReference type="ChEBI" id="CHEBI:58210"/>
    </cofactor>
</comment>
<comment type="similarity">
    <text evidence="2">Belongs to the nitroreductase family.</text>
</comment>
<protein>
    <recommendedName>
        <fullName>Putative NADH dehydrogenase/NAD(P)H nitroreductase AF_2267</fullName>
        <ecNumber>1.-.-.-</ecNumber>
    </recommendedName>
</protein>